<name>ENGB_YERPN</name>
<proteinExistence type="inferred from homology"/>
<dbReference type="EMBL" id="CP000305">
    <property type="protein sequence ID" value="ABG16579.1"/>
    <property type="molecule type" value="Genomic_DNA"/>
</dbReference>
<dbReference type="EMBL" id="ACNQ01000006">
    <property type="protein sequence ID" value="EEO78025.1"/>
    <property type="molecule type" value="Genomic_DNA"/>
</dbReference>
<dbReference type="SMR" id="Q1CN51"/>
<dbReference type="KEGG" id="ypn:YPN_0246"/>
<dbReference type="HOGENOM" id="CLU_033732_1_2_6"/>
<dbReference type="Proteomes" id="UP000008936">
    <property type="component" value="Chromosome"/>
</dbReference>
<dbReference type="GO" id="GO:0005829">
    <property type="term" value="C:cytosol"/>
    <property type="evidence" value="ECO:0007669"/>
    <property type="project" value="TreeGrafter"/>
</dbReference>
<dbReference type="GO" id="GO:0005525">
    <property type="term" value="F:GTP binding"/>
    <property type="evidence" value="ECO:0007669"/>
    <property type="project" value="UniProtKB-UniRule"/>
</dbReference>
<dbReference type="GO" id="GO:0046872">
    <property type="term" value="F:metal ion binding"/>
    <property type="evidence" value="ECO:0007669"/>
    <property type="project" value="UniProtKB-KW"/>
</dbReference>
<dbReference type="GO" id="GO:0000917">
    <property type="term" value="P:division septum assembly"/>
    <property type="evidence" value="ECO:0007669"/>
    <property type="project" value="UniProtKB-KW"/>
</dbReference>
<dbReference type="CDD" id="cd01876">
    <property type="entry name" value="YihA_EngB"/>
    <property type="match status" value="1"/>
</dbReference>
<dbReference type="FunFam" id="3.40.50.300:FF:000098">
    <property type="entry name" value="Probable GTP-binding protein EngB"/>
    <property type="match status" value="1"/>
</dbReference>
<dbReference type="Gene3D" id="3.40.50.300">
    <property type="entry name" value="P-loop containing nucleotide triphosphate hydrolases"/>
    <property type="match status" value="1"/>
</dbReference>
<dbReference type="HAMAP" id="MF_00321">
    <property type="entry name" value="GTPase_EngB"/>
    <property type="match status" value="1"/>
</dbReference>
<dbReference type="InterPro" id="IPR030393">
    <property type="entry name" value="G_ENGB_dom"/>
</dbReference>
<dbReference type="InterPro" id="IPR006073">
    <property type="entry name" value="GTP-bd"/>
</dbReference>
<dbReference type="InterPro" id="IPR019987">
    <property type="entry name" value="GTP-bd_ribosome_bio_YsxC"/>
</dbReference>
<dbReference type="InterPro" id="IPR027417">
    <property type="entry name" value="P-loop_NTPase"/>
</dbReference>
<dbReference type="NCBIfam" id="TIGR03598">
    <property type="entry name" value="GTPase_YsxC"/>
    <property type="match status" value="1"/>
</dbReference>
<dbReference type="PANTHER" id="PTHR11649:SF13">
    <property type="entry name" value="ENGB-TYPE G DOMAIN-CONTAINING PROTEIN"/>
    <property type="match status" value="1"/>
</dbReference>
<dbReference type="PANTHER" id="PTHR11649">
    <property type="entry name" value="MSS1/TRME-RELATED GTP-BINDING PROTEIN"/>
    <property type="match status" value="1"/>
</dbReference>
<dbReference type="Pfam" id="PF01926">
    <property type="entry name" value="MMR_HSR1"/>
    <property type="match status" value="1"/>
</dbReference>
<dbReference type="SUPFAM" id="SSF52540">
    <property type="entry name" value="P-loop containing nucleoside triphosphate hydrolases"/>
    <property type="match status" value="1"/>
</dbReference>
<dbReference type="PROSITE" id="PS51706">
    <property type="entry name" value="G_ENGB"/>
    <property type="match status" value="1"/>
</dbReference>
<accession>Q1CN51</accession>
<accession>C4GPM5</accession>
<protein>
    <recommendedName>
        <fullName evidence="1">Probable GTP-binding protein EngB</fullName>
    </recommendedName>
</protein>
<sequence>MTIRNYNYHMTHFVISAPDIRHLPRDEGIEVAFAGRSNAGKSSALNTLTNQKGLARTSKTPGRTQLINLFEVVDGVRLVDLPGYGYAEVPEEMKLKWQRALGEYLQKRNCLKGLVVLMDIRHPLKDLDQQMITWAVAVGTPVLLLLTKADKLASGARKAQLNLVREAIIPFMGDIQVEAFSSLKKIGVDKLREKLDTWFSEIPPEVMAEEFDGEGE</sequence>
<evidence type="ECO:0000255" key="1">
    <source>
        <dbReference type="HAMAP-Rule" id="MF_00321"/>
    </source>
</evidence>
<comment type="function">
    <text evidence="1">Necessary for normal cell division and for the maintenance of normal septation.</text>
</comment>
<comment type="cofactor">
    <cofactor evidence="1">
        <name>Mg(2+)</name>
        <dbReference type="ChEBI" id="CHEBI:18420"/>
    </cofactor>
</comment>
<comment type="similarity">
    <text evidence="1">Belongs to the TRAFAC class TrmE-Era-EngA-EngB-Septin-like GTPase superfamily. EngB GTPase family.</text>
</comment>
<keyword id="KW-0131">Cell cycle</keyword>
<keyword id="KW-0132">Cell division</keyword>
<keyword id="KW-0342">GTP-binding</keyword>
<keyword id="KW-0460">Magnesium</keyword>
<keyword id="KW-0479">Metal-binding</keyword>
<keyword id="KW-0547">Nucleotide-binding</keyword>
<keyword id="KW-0717">Septation</keyword>
<organism>
    <name type="scientific">Yersinia pestis bv. Antiqua (strain Nepal516)</name>
    <dbReference type="NCBI Taxonomy" id="377628"/>
    <lineage>
        <taxon>Bacteria</taxon>
        <taxon>Pseudomonadati</taxon>
        <taxon>Pseudomonadota</taxon>
        <taxon>Gammaproteobacteria</taxon>
        <taxon>Enterobacterales</taxon>
        <taxon>Yersiniaceae</taxon>
        <taxon>Yersinia</taxon>
    </lineage>
</organism>
<reference key="1">
    <citation type="journal article" date="2006" name="J. Bacteriol.">
        <title>Complete genome sequence of Yersinia pestis strains Antiqua and Nepal516: evidence of gene reduction in an emerging pathogen.</title>
        <authorList>
            <person name="Chain P.S.G."/>
            <person name="Hu P."/>
            <person name="Malfatti S.A."/>
            <person name="Radnedge L."/>
            <person name="Larimer F."/>
            <person name="Vergez L.M."/>
            <person name="Worsham P."/>
            <person name="Chu M.C."/>
            <person name="Andersen G.L."/>
        </authorList>
    </citation>
    <scope>NUCLEOTIDE SEQUENCE [LARGE SCALE GENOMIC DNA]</scope>
    <source>
        <strain>Nepal516</strain>
    </source>
</reference>
<reference key="2">
    <citation type="submission" date="2009-04" db="EMBL/GenBank/DDBJ databases">
        <title>Yersinia pestis Nepal516A whole genome shotgun sequencing project.</title>
        <authorList>
            <person name="Plunkett G. III"/>
            <person name="Anderson B.D."/>
            <person name="Baumler D.J."/>
            <person name="Burland V."/>
            <person name="Cabot E.L."/>
            <person name="Glasner J.D."/>
            <person name="Mau B."/>
            <person name="Neeno-Eckwall E."/>
            <person name="Perna N.T."/>
            <person name="Munk A.C."/>
            <person name="Tapia R."/>
            <person name="Green L.D."/>
            <person name="Rogers Y.C."/>
            <person name="Detter J.C."/>
            <person name="Bruce D.C."/>
            <person name="Brettin T.S."/>
        </authorList>
    </citation>
    <scope>NUCLEOTIDE SEQUENCE [LARGE SCALE GENOMIC DNA]</scope>
    <source>
        <strain>Nepal516</strain>
    </source>
</reference>
<feature type="chain" id="PRO_0000266984" description="Probable GTP-binding protein EngB">
    <location>
        <begin position="1"/>
        <end position="216"/>
    </location>
</feature>
<feature type="domain" description="EngB-type G" evidence="1">
    <location>
        <begin position="27"/>
        <end position="201"/>
    </location>
</feature>
<feature type="binding site" evidence="1">
    <location>
        <begin position="35"/>
        <end position="42"/>
    </location>
    <ligand>
        <name>GTP</name>
        <dbReference type="ChEBI" id="CHEBI:37565"/>
    </ligand>
</feature>
<feature type="binding site" evidence="1">
    <location>
        <position position="42"/>
    </location>
    <ligand>
        <name>Mg(2+)</name>
        <dbReference type="ChEBI" id="CHEBI:18420"/>
    </ligand>
</feature>
<feature type="binding site" evidence="1">
    <location>
        <begin position="62"/>
        <end position="66"/>
    </location>
    <ligand>
        <name>GTP</name>
        <dbReference type="ChEBI" id="CHEBI:37565"/>
    </ligand>
</feature>
<feature type="binding site" evidence="1">
    <location>
        <position position="64"/>
    </location>
    <ligand>
        <name>Mg(2+)</name>
        <dbReference type="ChEBI" id="CHEBI:18420"/>
    </ligand>
</feature>
<feature type="binding site" evidence="1">
    <location>
        <begin position="80"/>
        <end position="83"/>
    </location>
    <ligand>
        <name>GTP</name>
        <dbReference type="ChEBI" id="CHEBI:37565"/>
    </ligand>
</feature>
<feature type="binding site" evidence="1">
    <location>
        <begin position="147"/>
        <end position="150"/>
    </location>
    <ligand>
        <name>GTP</name>
        <dbReference type="ChEBI" id="CHEBI:37565"/>
    </ligand>
</feature>
<feature type="binding site" evidence="1">
    <location>
        <begin position="180"/>
        <end position="182"/>
    </location>
    <ligand>
        <name>GTP</name>
        <dbReference type="ChEBI" id="CHEBI:37565"/>
    </ligand>
</feature>
<gene>
    <name evidence="1" type="primary">engB</name>
    <name type="ordered locus">YPN_0246</name>
    <name type="ORF">YP516_0236</name>
</gene>